<comment type="subcellular location">
    <subcellularLocation>
        <location evidence="1">Endoplasmic reticulum membrane</location>
        <topology evidence="1">Single-pass type I membrane protein</topology>
    </subcellularLocation>
</comment>
<comment type="similarity">
    <text evidence="4">Belongs to the EMP24/GP25L family.</text>
</comment>
<dbReference type="EMBL" id="AK007320">
    <property type="protein sequence ID" value="BAB24955.1"/>
    <property type="molecule type" value="mRNA"/>
</dbReference>
<dbReference type="EMBL" id="AK007518">
    <property type="protein sequence ID" value="BAB25086.1"/>
    <property type="molecule type" value="mRNA"/>
</dbReference>
<dbReference type="EMBL" id="AK007830">
    <property type="protein sequence ID" value="BAB25290.1"/>
    <property type="molecule type" value="mRNA"/>
</dbReference>
<dbReference type="EMBL" id="AK007885">
    <property type="protein sequence ID" value="BAB25330.1"/>
    <property type="molecule type" value="mRNA"/>
</dbReference>
<dbReference type="EMBL" id="BC086923">
    <property type="protein sequence ID" value="AAH86923.1"/>
    <property type="molecule type" value="mRNA"/>
</dbReference>
<dbReference type="CCDS" id="CCDS22645.1"/>
<dbReference type="RefSeq" id="NP_079734.1">
    <property type="nucleotide sequence ID" value="NM_025458.2"/>
</dbReference>
<dbReference type="SMR" id="Q9CQG0"/>
<dbReference type="FunCoup" id="Q9CQG0">
    <property type="interactions" value="478"/>
</dbReference>
<dbReference type="STRING" id="10090.ENSMUSP00000034393"/>
<dbReference type="GlyCosmos" id="Q9CQG0">
    <property type="glycosylation" value="2 sites, No reported glycans"/>
</dbReference>
<dbReference type="GlyGen" id="Q9CQG0">
    <property type="glycosylation" value="2 sites"/>
</dbReference>
<dbReference type="PhosphoSitePlus" id="Q9CQG0"/>
<dbReference type="PaxDb" id="10090-ENSMUSP00000034393"/>
<dbReference type="ProteomicsDB" id="259475"/>
<dbReference type="DNASU" id="66269"/>
<dbReference type="Ensembl" id="ENSMUST00000034393.7">
    <property type="protein sequence ID" value="ENSMUSP00000034393.6"/>
    <property type="gene ID" value="ENSMUSG00000031919.7"/>
</dbReference>
<dbReference type="GeneID" id="66269"/>
<dbReference type="KEGG" id="mmu:66269"/>
<dbReference type="UCSC" id="uc009nha.1">
    <property type="organism name" value="mouse"/>
</dbReference>
<dbReference type="AGR" id="MGI:1913519"/>
<dbReference type="CTD" id="146456"/>
<dbReference type="MGI" id="MGI:1913519">
    <property type="gene designation" value="Tmed6"/>
</dbReference>
<dbReference type="VEuPathDB" id="HostDB:ENSMUSG00000031919"/>
<dbReference type="eggNOG" id="KOG3287">
    <property type="taxonomic scope" value="Eukaryota"/>
</dbReference>
<dbReference type="GeneTree" id="ENSGT00390000010961"/>
<dbReference type="HOGENOM" id="CLU_066963_5_1_1"/>
<dbReference type="InParanoid" id="Q9CQG0"/>
<dbReference type="OMA" id="HNRFSTM"/>
<dbReference type="OrthoDB" id="10037706at2759"/>
<dbReference type="PhylomeDB" id="Q9CQG0"/>
<dbReference type="TreeFam" id="TF313000"/>
<dbReference type="BioGRID-ORCS" id="66269">
    <property type="hits" value="1 hit in 77 CRISPR screens"/>
</dbReference>
<dbReference type="ChiTaRS" id="Tmed6">
    <property type="organism name" value="mouse"/>
</dbReference>
<dbReference type="PRO" id="PR:Q9CQG0"/>
<dbReference type="Proteomes" id="UP000000589">
    <property type="component" value="Chromosome 8"/>
</dbReference>
<dbReference type="RNAct" id="Q9CQG0">
    <property type="molecule type" value="protein"/>
</dbReference>
<dbReference type="Bgee" id="ENSMUSG00000031919">
    <property type="expression patterns" value="Expressed in epithelium of stomach and 57 other cell types or tissues"/>
</dbReference>
<dbReference type="GO" id="GO:0005789">
    <property type="term" value="C:endoplasmic reticulum membrane"/>
    <property type="evidence" value="ECO:0007669"/>
    <property type="project" value="UniProtKB-SubCell"/>
</dbReference>
<dbReference type="InterPro" id="IPR015720">
    <property type="entry name" value="Emp24-like"/>
</dbReference>
<dbReference type="InterPro" id="IPR009038">
    <property type="entry name" value="GOLD_dom"/>
</dbReference>
<dbReference type="PANTHER" id="PTHR22811">
    <property type="entry name" value="TRANSMEMBRANE EMP24 DOMAIN-CONTAINING PROTEIN"/>
    <property type="match status" value="1"/>
</dbReference>
<dbReference type="Pfam" id="PF01105">
    <property type="entry name" value="EMP24_GP25L"/>
    <property type="match status" value="1"/>
</dbReference>
<dbReference type="SMART" id="SM01190">
    <property type="entry name" value="EMP24_GP25L"/>
    <property type="match status" value="1"/>
</dbReference>
<dbReference type="PROSITE" id="PS50866">
    <property type="entry name" value="GOLD"/>
    <property type="match status" value="1"/>
</dbReference>
<name>TMED6_MOUSE</name>
<proteinExistence type="evidence at protein level"/>
<keyword id="KW-0256">Endoplasmic reticulum</keyword>
<keyword id="KW-0325">Glycoprotein</keyword>
<keyword id="KW-0472">Membrane</keyword>
<keyword id="KW-1185">Reference proteome</keyword>
<keyword id="KW-0732">Signal</keyword>
<keyword id="KW-0812">Transmembrane</keyword>
<keyword id="KW-1133">Transmembrane helix</keyword>
<reference key="1">
    <citation type="journal article" date="2005" name="Science">
        <title>The transcriptional landscape of the mammalian genome.</title>
        <authorList>
            <person name="Carninci P."/>
            <person name="Kasukawa T."/>
            <person name="Katayama S."/>
            <person name="Gough J."/>
            <person name="Frith M.C."/>
            <person name="Maeda N."/>
            <person name="Oyama R."/>
            <person name="Ravasi T."/>
            <person name="Lenhard B."/>
            <person name="Wells C."/>
            <person name="Kodzius R."/>
            <person name="Shimokawa K."/>
            <person name="Bajic V.B."/>
            <person name="Brenner S.E."/>
            <person name="Batalov S."/>
            <person name="Forrest A.R."/>
            <person name="Zavolan M."/>
            <person name="Davis M.J."/>
            <person name="Wilming L.G."/>
            <person name="Aidinis V."/>
            <person name="Allen J.E."/>
            <person name="Ambesi-Impiombato A."/>
            <person name="Apweiler R."/>
            <person name="Aturaliya R.N."/>
            <person name="Bailey T.L."/>
            <person name="Bansal M."/>
            <person name="Baxter L."/>
            <person name="Beisel K.W."/>
            <person name="Bersano T."/>
            <person name="Bono H."/>
            <person name="Chalk A.M."/>
            <person name="Chiu K.P."/>
            <person name="Choudhary V."/>
            <person name="Christoffels A."/>
            <person name="Clutterbuck D.R."/>
            <person name="Crowe M.L."/>
            <person name="Dalla E."/>
            <person name="Dalrymple B.P."/>
            <person name="de Bono B."/>
            <person name="Della Gatta G."/>
            <person name="di Bernardo D."/>
            <person name="Down T."/>
            <person name="Engstrom P."/>
            <person name="Fagiolini M."/>
            <person name="Faulkner G."/>
            <person name="Fletcher C.F."/>
            <person name="Fukushima T."/>
            <person name="Furuno M."/>
            <person name="Futaki S."/>
            <person name="Gariboldi M."/>
            <person name="Georgii-Hemming P."/>
            <person name="Gingeras T.R."/>
            <person name="Gojobori T."/>
            <person name="Green R.E."/>
            <person name="Gustincich S."/>
            <person name="Harbers M."/>
            <person name="Hayashi Y."/>
            <person name="Hensch T.K."/>
            <person name="Hirokawa N."/>
            <person name="Hill D."/>
            <person name="Huminiecki L."/>
            <person name="Iacono M."/>
            <person name="Ikeo K."/>
            <person name="Iwama A."/>
            <person name="Ishikawa T."/>
            <person name="Jakt M."/>
            <person name="Kanapin A."/>
            <person name="Katoh M."/>
            <person name="Kawasawa Y."/>
            <person name="Kelso J."/>
            <person name="Kitamura H."/>
            <person name="Kitano H."/>
            <person name="Kollias G."/>
            <person name="Krishnan S.P."/>
            <person name="Kruger A."/>
            <person name="Kummerfeld S.K."/>
            <person name="Kurochkin I.V."/>
            <person name="Lareau L.F."/>
            <person name="Lazarevic D."/>
            <person name="Lipovich L."/>
            <person name="Liu J."/>
            <person name="Liuni S."/>
            <person name="McWilliam S."/>
            <person name="Madan Babu M."/>
            <person name="Madera M."/>
            <person name="Marchionni L."/>
            <person name="Matsuda H."/>
            <person name="Matsuzawa S."/>
            <person name="Miki H."/>
            <person name="Mignone F."/>
            <person name="Miyake S."/>
            <person name="Morris K."/>
            <person name="Mottagui-Tabar S."/>
            <person name="Mulder N."/>
            <person name="Nakano N."/>
            <person name="Nakauchi H."/>
            <person name="Ng P."/>
            <person name="Nilsson R."/>
            <person name="Nishiguchi S."/>
            <person name="Nishikawa S."/>
            <person name="Nori F."/>
            <person name="Ohara O."/>
            <person name="Okazaki Y."/>
            <person name="Orlando V."/>
            <person name="Pang K.C."/>
            <person name="Pavan W.J."/>
            <person name="Pavesi G."/>
            <person name="Pesole G."/>
            <person name="Petrovsky N."/>
            <person name="Piazza S."/>
            <person name="Reed J."/>
            <person name="Reid J.F."/>
            <person name="Ring B.Z."/>
            <person name="Ringwald M."/>
            <person name="Rost B."/>
            <person name="Ruan Y."/>
            <person name="Salzberg S.L."/>
            <person name="Sandelin A."/>
            <person name="Schneider C."/>
            <person name="Schoenbach C."/>
            <person name="Sekiguchi K."/>
            <person name="Semple C.A."/>
            <person name="Seno S."/>
            <person name="Sessa L."/>
            <person name="Sheng Y."/>
            <person name="Shibata Y."/>
            <person name="Shimada H."/>
            <person name="Shimada K."/>
            <person name="Silva D."/>
            <person name="Sinclair B."/>
            <person name="Sperling S."/>
            <person name="Stupka E."/>
            <person name="Sugiura K."/>
            <person name="Sultana R."/>
            <person name="Takenaka Y."/>
            <person name="Taki K."/>
            <person name="Tammoja K."/>
            <person name="Tan S.L."/>
            <person name="Tang S."/>
            <person name="Taylor M.S."/>
            <person name="Tegner J."/>
            <person name="Teichmann S.A."/>
            <person name="Ueda H.R."/>
            <person name="van Nimwegen E."/>
            <person name="Verardo R."/>
            <person name="Wei C.L."/>
            <person name="Yagi K."/>
            <person name="Yamanishi H."/>
            <person name="Zabarovsky E."/>
            <person name="Zhu S."/>
            <person name="Zimmer A."/>
            <person name="Hide W."/>
            <person name="Bult C."/>
            <person name="Grimmond S.M."/>
            <person name="Teasdale R.D."/>
            <person name="Liu E.T."/>
            <person name="Brusic V."/>
            <person name="Quackenbush J."/>
            <person name="Wahlestedt C."/>
            <person name="Mattick J.S."/>
            <person name="Hume D.A."/>
            <person name="Kai C."/>
            <person name="Sasaki D."/>
            <person name="Tomaru Y."/>
            <person name="Fukuda S."/>
            <person name="Kanamori-Katayama M."/>
            <person name="Suzuki M."/>
            <person name="Aoki J."/>
            <person name="Arakawa T."/>
            <person name="Iida J."/>
            <person name="Imamura K."/>
            <person name="Itoh M."/>
            <person name="Kato T."/>
            <person name="Kawaji H."/>
            <person name="Kawagashira N."/>
            <person name="Kawashima T."/>
            <person name="Kojima M."/>
            <person name="Kondo S."/>
            <person name="Konno H."/>
            <person name="Nakano K."/>
            <person name="Ninomiya N."/>
            <person name="Nishio T."/>
            <person name="Okada M."/>
            <person name="Plessy C."/>
            <person name="Shibata K."/>
            <person name="Shiraki T."/>
            <person name="Suzuki S."/>
            <person name="Tagami M."/>
            <person name="Waki K."/>
            <person name="Watahiki A."/>
            <person name="Okamura-Oho Y."/>
            <person name="Suzuki H."/>
            <person name="Kawai J."/>
            <person name="Hayashizaki Y."/>
        </authorList>
    </citation>
    <scope>NUCLEOTIDE SEQUENCE [LARGE SCALE MRNA]</scope>
    <source>
        <strain>C57BL/6J</strain>
        <tissue>Pancreas</tissue>
    </source>
</reference>
<reference key="2">
    <citation type="journal article" date="2004" name="Genome Res.">
        <title>The status, quality, and expansion of the NIH full-length cDNA project: the Mammalian Gene Collection (MGC).</title>
        <authorList>
            <consortium name="The MGC Project Team"/>
        </authorList>
    </citation>
    <scope>NUCLEOTIDE SEQUENCE [LARGE SCALE MRNA]</scope>
    <source>
        <tissue>Kidney</tissue>
    </source>
</reference>
<reference key="3">
    <citation type="journal article" date="2010" name="Cell">
        <title>A tissue-specific atlas of mouse protein phosphorylation and expression.</title>
        <authorList>
            <person name="Huttlin E.L."/>
            <person name="Jedrychowski M.P."/>
            <person name="Elias J.E."/>
            <person name="Goswami T."/>
            <person name="Rad R."/>
            <person name="Beausoleil S.A."/>
            <person name="Villen J."/>
            <person name="Haas W."/>
            <person name="Sowa M.E."/>
            <person name="Gygi S.P."/>
        </authorList>
    </citation>
    <scope>IDENTIFICATION BY MASS SPECTROMETRY [LARGE SCALE ANALYSIS]</scope>
    <source>
        <tissue>Pancreas</tissue>
        <tissue>Spleen</tissue>
    </source>
</reference>
<gene>
    <name type="primary">Tmed6</name>
</gene>
<feature type="signal peptide" evidence="2">
    <location>
        <begin position="1"/>
        <end position="21"/>
    </location>
</feature>
<feature type="chain" id="PRO_0000010394" description="Transmembrane emp24 domain-containing protein 6">
    <location>
        <begin position="22"/>
        <end position="239"/>
    </location>
</feature>
<feature type="topological domain" description="Lumenal" evidence="2">
    <location>
        <begin position="22"/>
        <end position="200"/>
    </location>
</feature>
<feature type="transmembrane region" description="Helical" evidence="2">
    <location>
        <begin position="201"/>
        <end position="223"/>
    </location>
</feature>
<feature type="topological domain" description="Cytoplasmic" evidence="2">
    <location>
        <begin position="224"/>
        <end position="239"/>
    </location>
</feature>
<feature type="domain" description="GOLD" evidence="3">
    <location>
        <begin position="53"/>
        <end position="138"/>
    </location>
</feature>
<feature type="glycosylation site" description="N-linked (GlcNAc...) asparagine" evidence="2">
    <location>
        <position position="156"/>
    </location>
</feature>
<feature type="glycosylation site" description="N-linked (GlcNAc...) asparagine" evidence="2">
    <location>
        <position position="197"/>
    </location>
</feature>
<accession>Q9CQG0</accession>
<organism>
    <name type="scientific">Mus musculus</name>
    <name type="common">Mouse</name>
    <dbReference type="NCBI Taxonomy" id="10090"/>
    <lineage>
        <taxon>Eukaryota</taxon>
        <taxon>Metazoa</taxon>
        <taxon>Chordata</taxon>
        <taxon>Craniata</taxon>
        <taxon>Vertebrata</taxon>
        <taxon>Euteleostomi</taxon>
        <taxon>Mammalia</taxon>
        <taxon>Eutheria</taxon>
        <taxon>Euarchontoglires</taxon>
        <taxon>Glires</taxon>
        <taxon>Rodentia</taxon>
        <taxon>Myomorpha</taxon>
        <taxon>Muroidea</taxon>
        <taxon>Muridae</taxon>
        <taxon>Murinae</taxon>
        <taxon>Mus</taxon>
        <taxon>Mus</taxon>
    </lineage>
</organism>
<evidence type="ECO:0000250" key="1"/>
<evidence type="ECO:0000255" key="2"/>
<evidence type="ECO:0000255" key="3">
    <source>
        <dbReference type="PROSITE-ProRule" id="PRU00096"/>
    </source>
</evidence>
<evidence type="ECO:0000305" key="4"/>
<sequence>MFPLLLVAELVVLSLVTSVKSQETDPLHGSKDQPLFRGADRNDFAIVVSPGAIECFWQFADQMGYLYFSYEVQRILGMSHDRHIVATAHTPQGFLIDTSQDVRGQINFATQETGFYQLCLKNEQNRFSSIQVYLNFGVFYEGPEVDHKQSQRKQLNDTLDAIKDSTQRVENQVFHMWRFYNYARMRKVADFFLLQSNYTYVNWWSTAQSLAIVLSGALQLYFLKRLFTASTTDTKKPRC</sequence>
<protein>
    <recommendedName>
        <fullName>Transmembrane emp24 domain-containing protein 6</fullName>
    </recommendedName>
    <alternativeName>
        <fullName>p24 family protein gamma-5</fullName>
        <shortName>p24gamma5</shortName>
    </alternativeName>
</protein>